<accession>Q963D0</accession>
<sequence length="82" mass="8762">MRLVVCLVFLASFALVCQGQVYKGGYTRPIPRPPPFVRPLPGGPIGPYNGCPISCRGISFSQARSCCSRLGRCCHVGKGYSG</sequence>
<name>PEN3D_PENVA</name>
<evidence type="ECO:0000250" key="1"/>
<evidence type="ECO:0000255" key="2"/>
<evidence type="ECO:0000305" key="3"/>
<comment type="function">
    <text evidence="1">Antibacterial and antifungal activity. Presents chitin-binding activity (By similarity).</text>
</comment>
<comment type="subcellular location">
    <subcellularLocation>
        <location>Cytoplasmic granule</location>
    </subcellularLocation>
    <text>Cytoplasmic granules of hemocytes and to a lesser extent in small granules of hemocytes.</text>
</comment>
<comment type="similarity">
    <text evidence="3">Belongs to the penaeidin family.</text>
</comment>
<reference key="1">
    <citation type="journal article" date="2002" name="Immunogenetics">
        <title>Diversity of the penaeidin antimicrobial peptides in two shrimp species.</title>
        <authorList>
            <person name="Cuthbertson B.J."/>
            <person name="Shepard E.F."/>
            <person name="Chapman R.W."/>
            <person name="Gross P.S."/>
        </authorList>
    </citation>
    <scope>NUCLEOTIDE SEQUENCE [MRNA]</scope>
    <source>
        <tissue>Hemocyte</tissue>
    </source>
</reference>
<feature type="signal peptide" evidence="2">
    <location>
        <begin position="1"/>
        <end position="19"/>
    </location>
</feature>
<feature type="chain" id="PRO_0000023509" description="Penaeidin-3d">
    <location>
        <begin position="20"/>
        <end position="81"/>
    </location>
</feature>
<feature type="modified residue" description="Pyrrolidone carboxylic acid" evidence="1">
    <location>
        <position position="20"/>
    </location>
</feature>
<feature type="modified residue" description="Serine amide" evidence="1">
    <location>
        <position position="81"/>
    </location>
</feature>
<feature type="disulfide bond" evidence="1">
    <location>
        <begin position="51"/>
        <end position="66"/>
    </location>
</feature>
<feature type="disulfide bond" evidence="1">
    <location>
        <begin position="55"/>
        <end position="73"/>
    </location>
</feature>
<feature type="disulfide bond" evidence="1">
    <location>
        <begin position="67"/>
        <end position="74"/>
    </location>
</feature>
<dbReference type="EMBL" id="AF390140">
    <property type="protein sequence ID" value="AAK77533.1"/>
    <property type="molecule type" value="mRNA"/>
</dbReference>
<dbReference type="SMR" id="Q963D0"/>
<dbReference type="GO" id="GO:0005737">
    <property type="term" value="C:cytoplasm"/>
    <property type="evidence" value="ECO:0007669"/>
    <property type="project" value="InterPro"/>
</dbReference>
<dbReference type="GO" id="GO:0008061">
    <property type="term" value="F:chitin binding"/>
    <property type="evidence" value="ECO:0007669"/>
    <property type="project" value="UniProtKB-KW"/>
</dbReference>
<dbReference type="GO" id="GO:0042742">
    <property type="term" value="P:defense response to bacterium"/>
    <property type="evidence" value="ECO:0007669"/>
    <property type="project" value="UniProtKB-KW"/>
</dbReference>
<dbReference type="GO" id="GO:0050832">
    <property type="term" value="P:defense response to fungus"/>
    <property type="evidence" value="ECO:0007669"/>
    <property type="project" value="UniProtKB-KW"/>
</dbReference>
<dbReference type="GO" id="GO:0031640">
    <property type="term" value="P:killing of cells of another organism"/>
    <property type="evidence" value="ECO:0007669"/>
    <property type="project" value="UniProtKB-KW"/>
</dbReference>
<dbReference type="InterPro" id="IPR009226">
    <property type="entry name" value="Penaeidin"/>
</dbReference>
<dbReference type="Pfam" id="PF05927">
    <property type="entry name" value="Penaeidin"/>
    <property type="match status" value="1"/>
</dbReference>
<keyword id="KW-0027">Amidation</keyword>
<keyword id="KW-0044">Antibiotic</keyword>
<keyword id="KW-0929">Antimicrobial</keyword>
<keyword id="KW-0147">Chitin-binding</keyword>
<keyword id="KW-1015">Disulfide bond</keyword>
<keyword id="KW-0295">Fungicide</keyword>
<keyword id="KW-0873">Pyrrolidone carboxylic acid</keyword>
<keyword id="KW-0732">Signal</keyword>
<proteinExistence type="inferred from homology"/>
<organism>
    <name type="scientific">Penaeus vannamei</name>
    <name type="common">Whiteleg shrimp</name>
    <name type="synonym">Litopenaeus vannamei</name>
    <dbReference type="NCBI Taxonomy" id="6689"/>
    <lineage>
        <taxon>Eukaryota</taxon>
        <taxon>Metazoa</taxon>
        <taxon>Ecdysozoa</taxon>
        <taxon>Arthropoda</taxon>
        <taxon>Crustacea</taxon>
        <taxon>Multicrustacea</taxon>
        <taxon>Malacostraca</taxon>
        <taxon>Eumalacostraca</taxon>
        <taxon>Eucarida</taxon>
        <taxon>Decapoda</taxon>
        <taxon>Dendrobranchiata</taxon>
        <taxon>Penaeoidea</taxon>
        <taxon>Penaeidae</taxon>
        <taxon>Penaeus</taxon>
    </lineage>
</organism>
<protein>
    <recommendedName>
        <fullName>Penaeidin-3d</fullName>
        <shortName>Pen-3d</shortName>
    </recommendedName>
</protein>